<proteinExistence type="inferred from homology"/>
<gene>
    <name evidence="1" type="primary">ispH</name>
    <name type="ordered locus">CF0272</name>
</gene>
<feature type="chain" id="PRO_1000021100" description="4-hydroxy-3-methylbut-2-enyl diphosphate reductase">
    <location>
        <begin position="1"/>
        <end position="309"/>
    </location>
</feature>
<feature type="active site" description="Proton donor" evidence="1">
    <location>
        <position position="127"/>
    </location>
</feature>
<feature type="binding site" evidence="1">
    <location>
        <position position="13"/>
    </location>
    <ligand>
        <name>[4Fe-4S] cluster</name>
        <dbReference type="ChEBI" id="CHEBI:49883"/>
    </ligand>
</feature>
<feature type="binding site" evidence="1">
    <location>
        <position position="42"/>
    </location>
    <ligand>
        <name>(2E)-4-hydroxy-3-methylbut-2-enyl diphosphate</name>
        <dbReference type="ChEBI" id="CHEBI:128753"/>
    </ligand>
</feature>
<feature type="binding site" evidence="1">
    <location>
        <position position="42"/>
    </location>
    <ligand>
        <name>dimethylallyl diphosphate</name>
        <dbReference type="ChEBI" id="CHEBI:57623"/>
    </ligand>
</feature>
<feature type="binding site" evidence="1">
    <location>
        <position position="42"/>
    </location>
    <ligand>
        <name>isopentenyl diphosphate</name>
        <dbReference type="ChEBI" id="CHEBI:128769"/>
    </ligand>
</feature>
<feature type="binding site" evidence="1">
    <location>
        <position position="75"/>
    </location>
    <ligand>
        <name>(2E)-4-hydroxy-3-methylbut-2-enyl diphosphate</name>
        <dbReference type="ChEBI" id="CHEBI:128753"/>
    </ligand>
</feature>
<feature type="binding site" evidence="1">
    <location>
        <position position="75"/>
    </location>
    <ligand>
        <name>dimethylallyl diphosphate</name>
        <dbReference type="ChEBI" id="CHEBI:57623"/>
    </ligand>
</feature>
<feature type="binding site" evidence="1">
    <location>
        <position position="75"/>
    </location>
    <ligand>
        <name>isopentenyl diphosphate</name>
        <dbReference type="ChEBI" id="CHEBI:128769"/>
    </ligand>
</feature>
<feature type="binding site" evidence="1">
    <location>
        <position position="97"/>
    </location>
    <ligand>
        <name>[4Fe-4S] cluster</name>
        <dbReference type="ChEBI" id="CHEBI:49883"/>
    </ligand>
</feature>
<feature type="binding site" evidence="1">
    <location>
        <position position="125"/>
    </location>
    <ligand>
        <name>(2E)-4-hydroxy-3-methylbut-2-enyl diphosphate</name>
        <dbReference type="ChEBI" id="CHEBI:128753"/>
    </ligand>
</feature>
<feature type="binding site" evidence="1">
    <location>
        <position position="125"/>
    </location>
    <ligand>
        <name>dimethylallyl diphosphate</name>
        <dbReference type="ChEBI" id="CHEBI:57623"/>
    </ligand>
</feature>
<feature type="binding site" evidence="1">
    <location>
        <position position="125"/>
    </location>
    <ligand>
        <name>isopentenyl diphosphate</name>
        <dbReference type="ChEBI" id="CHEBI:128769"/>
    </ligand>
</feature>
<feature type="binding site" evidence="1">
    <location>
        <position position="165"/>
    </location>
    <ligand>
        <name>(2E)-4-hydroxy-3-methylbut-2-enyl diphosphate</name>
        <dbReference type="ChEBI" id="CHEBI:128753"/>
    </ligand>
</feature>
<feature type="binding site" evidence="1">
    <location>
        <position position="195"/>
    </location>
    <ligand>
        <name>[4Fe-4S] cluster</name>
        <dbReference type="ChEBI" id="CHEBI:49883"/>
    </ligand>
</feature>
<feature type="binding site" evidence="1">
    <location>
        <position position="223"/>
    </location>
    <ligand>
        <name>(2E)-4-hydroxy-3-methylbut-2-enyl diphosphate</name>
        <dbReference type="ChEBI" id="CHEBI:128753"/>
    </ligand>
</feature>
<feature type="binding site" evidence="1">
    <location>
        <position position="223"/>
    </location>
    <ligand>
        <name>dimethylallyl diphosphate</name>
        <dbReference type="ChEBI" id="CHEBI:57623"/>
    </ligand>
</feature>
<feature type="binding site" evidence="1">
    <location>
        <position position="223"/>
    </location>
    <ligand>
        <name>isopentenyl diphosphate</name>
        <dbReference type="ChEBI" id="CHEBI:128769"/>
    </ligand>
</feature>
<feature type="binding site" evidence="1">
    <location>
        <position position="224"/>
    </location>
    <ligand>
        <name>(2E)-4-hydroxy-3-methylbut-2-enyl diphosphate</name>
        <dbReference type="ChEBI" id="CHEBI:128753"/>
    </ligand>
</feature>
<feature type="binding site" evidence="1">
    <location>
        <position position="224"/>
    </location>
    <ligand>
        <name>dimethylallyl diphosphate</name>
        <dbReference type="ChEBI" id="CHEBI:57623"/>
    </ligand>
</feature>
<feature type="binding site" evidence="1">
    <location>
        <position position="224"/>
    </location>
    <ligand>
        <name>isopentenyl diphosphate</name>
        <dbReference type="ChEBI" id="CHEBI:128769"/>
    </ligand>
</feature>
<feature type="binding site" evidence="1">
    <location>
        <position position="225"/>
    </location>
    <ligand>
        <name>(2E)-4-hydroxy-3-methylbut-2-enyl diphosphate</name>
        <dbReference type="ChEBI" id="CHEBI:128753"/>
    </ligand>
</feature>
<feature type="binding site" evidence="1">
    <location>
        <position position="225"/>
    </location>
    <ligand>
        <name>dimethylallyl diphosphate</name>
        <dbReference type="ChEBI" id="CHEBI:57623"/>
    </ligand>
</feature>
<feature type="binding site" evidence="1">
    <location>
        <position position="225"/>
    </location>
    <ligand>
        <name>isopentenyl diphosphate</name>
        <dbReference type="ChEBI" id="CHEBI:128769"/>
    </ligand>
</feature>
<feature type="binding site" evidence="1">
    <location>
        <position position="267"/>
    </location>
    <ligand>
        <name>(2E)-4-hydroxy-3-methylbut-2-enyl diphosphate</name>
        <dbReference type="ChEBI" id="CHEBI:128753"/>
    </ligand>
</feature>
<feature type="binding site" evidence="1">
    <location>
        <position position="267"/>
    </location>
    <ligand>
        <name>dimethylallyl diphosphate</name>
        <dbReference type="ChEBI" id="CHEBI:57623"/>
    </ligand>
</feature>
<feature type="binding site" evidence="1">
    <location>
        <position position="267"/>
    </location>
    <ligand>
        <name>isopentenyl diphosphate</name>
        <dbReference type="ChEBI" id="CHEBI:128769"/>
    </ligand>
</feature>
<sequence length="309" mass="34415">MRRVILSNPRGFCAGVVRAIQVVEAALEKWGAPIYVKHEIVHNRHVVDDLRRRGAIFIENLSDIPCGGKVIYSAHGIPPEVREEAKNRNLFDIDATCVLVTKIHSAVKLYASKGYQIILIGKKKHVEVIGIYGEAPDSVTVVEKVEDVENLPFGIDTPLFFVTQTTLSLDDVAEITQALKVRYPNVITLPSSSVCYATQNRQEALRSVLPRVNFVYVVGDVQSSNSNRLREVAERRNIPARLVNSPDHISDEILNYSGDIAITAGASTPENIVQLCISRLKELIPDLQVEEDIFAIEDVVFQPPKELRN</sequence>
<name>ISPH_CHLFF</name>
<dbReference type="EC" id="1.17.7.4" evidence="1"/>
<dbReference type="EMBL" id="AP006861">
    <property type="protein sequence ID" value="BAE81044.1"/>
    <property type="molecule type" value="Genomic_DNA"/>
</dbReference>
<dbReference type="RefSeq" id="WP_011457825.1">
    <property type="nucleotide sequence ID" value="NC_007899.1"/>
</dbReference>
<dbReference type="SMR" id="Q255J4"/>
<dbReference type="STRING" id="264202.CF0272"/>
<dbReference type="KEGG" id="cfe:CF0272"/>
<dbReference type="eggNOG" id="COG0761">
    <property type="taxonomic scope" value="Bacteria"/>
</dbReference>
<dbReference type="HOGENOM" id="CLU_027486_1_1_0"/>
<dbReference type="OrthoDB" id="9777362at2"/>
<dbReference type="UniPathway" id="UPA00056">
    <property type="reaction ID" value="UER00097"/>
</dbReference>
<dbReference type="UniPathway" id="UPA00059">
    <property type="reaction ID" value="UER00105"/>
</dbReference>
<dbReference type="Proteomes" id="UP000001260">
    <property type="component" value="Chromosome"/>
</dbReference>
<dbReference type="GO" id="GO:0051539">
    <property type="term" value="F:4 iron, 4 sulfur cluster binding"/>
    <property type="evidence" value="ECO:0007669"/>
    <property type="project" value="UniProtKB-UniRule"/>
</dbReference>
<dbReference type="GO" id="GO:0051745">
    <property type="term" value="F:4-hydroxy-3-methylbut-2-enyl diphosphate reductase activity"/>
    <property type="evidence" value="ECO:0007669"/>
    <property type="project" value="UniProtKB-UniRule"/>
</dbReference>
<dbReference type="GO" id="GO:0046872">
    <property type="term" value="F:metal ion binding"/>
    <property type="evidence" value="ECO:0007669"/>
    <property type="project" value="UniProtKB-KW"/>
</dbReference>
<dbReference type="GO" id="GO:0050992">
    <property type="term" value="P:dimethylallyl diphosphate biosynthetic process"/>
    <property type="evidence" value="ECO:0007669"/>
    <property type="project" value="UniProtKB-UniRule"/>
</dbReference>
<dbReference type="GO" id="GO:0019288">
    <property type="term" value="P:isopentenyl diphosphate biosynthetic process, methylerythritol 4-phosphate pathway"/>
    <property type="evidence" value="ECO:0007669"/>
    <property type="project" value="UniProtKB-UniRule"/>
</dbReference>
<dbReference type="GO" id="GO:0016114">
    <property type="term" value="P:terpenoid biosynthetic process"/>
    <property type="evidence" value="ECO:0007669"/>
    <property type="project" value="UniProtKB-UniRule"/>
</dbReference>
<dbReference type="CDD" id="cd13944">
    <property type="entry name" value="lytB_ispH"/>
    <property type="match status" value="1"/>
</dbReference>
<dbReference type="Gene3D" id="3.40.50.11270">
    <property type="match status" value="1"/>
</dbReference>
<dbReference type="Gene3D" id="3.40.1010.20">
    <property type="entry name" value="4-hydroxy-3-methylbut-2-enyl diphosphate reductase, catalytic domain"/>
    <property type="match status" value="2"/>
</dbReference>
<dbReference type="HAMAP" id="MF_00191">
    <property type="entry name" value="IspH"/>
    <property type="match status" value="1"/>
</dbReference>
<dbReference type="InterPro" id="IPR003451">
    <property type="entry name" value="LytB/IspH"/>
</dbReference>
<dbReference type="NCBIfam" id="TIGR00216">
    <property type="entry name" value="ispH_lytB"/>
    <property type="match status" value="1"/>
</dbReference>
<dbReference type="NCBIfam" id="NF002190">
    <property type="entry name" value="PRK01045.1-4"/>
    <property type="match status" value="1"/>
</dbReference>
<dbReference type="PANTHER" id="PTHR30426">
    <property type="entry name" value="4-HYDROXY-3-METHYLBUT-2-ENYL DIPHOSPHATE REDUCTASE"/>
    <property type="match status" value="1"/>
</dbReference>
<dbReference type="PANTHER" id="PTHR30426:SF0">
    <property type="entry name" value="4-HYDROXY-3-METHYLBUT-2-ENYL DIPHOSPHATE REDUCTASE"/>
    <property type="match status" value="1"/>
</dbReference>
<dbReference type="Pfam" id="PF02401">
    <property type="entry name" value="LYTB"/>
    <property type="match status" value="1"/>
</dbReference>
<reference key="1">
    <citation type="journal article" date="2006" name="DNA Res.">
        <title>Genome sequence of the cat pathogen, Chlamydophila felis.</title>
        <authorList>
            <person name="Azuma Y."/>
            <person name="Hirakawa H."/>
            <person name="Yamashita A."/>
            <person name="Cai Y."/>
            <person name="Rahman M.A."/>
            <person name="Suzuki H."/>
            <person name="Mitaku S."/>
            <person name="Toh H."/>
            <person name="Goto S."/>
            <person name="Murakami T."/>
            <person name="Sugi K."/>
            <person name="Hayashi H."/>
            <person name="Fukushi H."/>
            <person name="Hattori M."/>
            <person name="Kuhara S."/>
            <person name="Shirai M."/>
        </authorList>
    </citation>
    <scope>NUCLEOTIDE SEQUENCE [LARGE SCALE GENOMIC DNA]</scope>
    <source>
        <strain>Fe/C-56</strain>
    </source>
</reference>
<evidence type="ECO:0000255" key="1">
    <source>
        <dbReference type="HAMAP-Rule" id="MF_00191"/>
    </source>
</evidence>
<comment type="function">
    <text evidence="1">Catalyzes the conversion of 1-hydroxy-2-methyl-2-(E)-butenyl 4-diphosphate (HMBPP) into a mixture of isopentenyl diphosphate (IPP) and dimethylallyl diphosphate (DMAPP). Acts in the terminal step of the DOXP/MEP pathway for isoprenoid precursor biosynthesis.</text>
</comment>
<comment type="catalytic activity">
    <reaction evidence="1">
        <text>isopentenyl diphosphate + 2 oxidized [2Fe-2S]-[ferredoxin] + H2O = (2E)-4-hydroxy-3-methylbut-2-enyl diphosphate + 2 reduced [2Fe-2S]-[ferredoxin] + 2 H(+)</text>
        <dbReference type="Rhea" id="RHEA:24488"/>
        <dbReference type="Rhea" id="RHEA-COMP:10000"/>
        <dbReference type="Rhea" id="RHEA-COMP:10001"/>
        <dbReference type="ChEBI" id="CHEBI:15377"/>
        <dbReference type="ChEBI" id="CHEBI:15378"/>
        <dbReference type="ChEBI" id="CHEBI:33737"/>
        <dbReference type="ChEBI" id="CHEBI:33738"/>
        <dbReference type="ChEBI" id="CHEBI:128753"/>
        <dbReference type="ChEBI" id="CHEBI:128769"/>
        <dbReference type="EC" id="1.17.7.4"/>
    </reaction>
</comment>
<comment type="catalytic activity">
    <reaction evidence="1">
        <text>dimethylallyl diphosphate + 2 oxidized [2Fe-2S]-[ferredoxin] + H2O = (2E)-4-hydroxy-3-methylbut-2-enyl diphosphate + 2 reduced [2Fe-2S]-[ferredoxin] + 2 H(+)</text>
        <dbReference type="Rhea" id="RHEA:24825"/>
        <dbReference type="Rhea" id="RHEA-COMP:10000"/>
        <dbReference type="Rhea" id="RHEA-COMP:10001"/>
        <dbReference type="ChEBI" id="CHEBI:15377"/>
        <dbReference type="ChEBI" id="CHEBI:15378"/>
        <dbReference type="ChEBI" id="CHEBI:33737"/>
        <dbReference type="ChEBI" id="CHEBI:33738"/>
        <dbReference type="ChEBI" id="CHEBI:57623"/>
        <dbReference type="ChEBI" id="CHEBI:128753"/>
        <dbReference type="EC" id="1.17.7.4"/>
    </reaction>
</comment>
<comment type="cofactor">
    <cofactor evidence="1">
        <name>[4Fe-4S] cluster</name>
        <dbReference type="ChEBI" id="CHEBI:49883"/>
    </cofactor>
    <text evidence="1">Binds 1 [4Fe-4S] cluster per subunit.</text>
</comment>
<comment type="pathway">
    <text evidence="1">Isoprenoid biosynthesis; dimethylallyl diphosphate biosynthesis; dimethylallyl diphosphate from (2E)-4-hydroxy-3-methylbutenyl diphosphate: step 1/1.</text>
</comment>
<comment type="pathway">
    <text evidence="1">Isoprenoid biosynthesis; isopentenyl diphosphate biosynthesis via DXP pathway; isopentenyl diphosphate from 1-deoxy-D-xylulose 5-phosphate: step 6/6.</text>
</comment>
<comment type="similarity">
    <text evidence="1">Belongs to the IspH family.</text>
</comment>
<accession>Q255J4</accession>
<keyword id="KW-0004">4Fe-4S</keyword>
<keyword id="KW-0408">Iron</keyword>
<keyword id="KW-0411">Iron-sulfur</keyword>
<keyword id="KW-0414">Isoprene biosynthesis</keyword>
<keyword id="KW-0479">Metal-binding</keyword>
<keyword id="KW-0560">Oxidoreductase</keyword>
<protein>
    <recommendedName>
        <fullName evidence="1">4-hydroxy-3-methylbut-2-enyl diphosphate reductase</fullName>
        <shortName evidence="1">HMBPP reductase</shortName>
        <ecNumber evidence="1">1.17.7.4</ecNumber>
    </recommendedName>
</protein>
<organism>
    <name type="scientific">Chlamydia felis (strain Fe/C-56)</name>
    <name type="common">Chlamydophila felis</name>
    <dbReference type="NCBI Taxonomy" id="264202"/>
    <lineage>
        <taxon>Bacteria</taxon>
        <taxon>Pseudomonadati</taxon>
        <taxon>Chlamydiota</taxon>
        <taxon>Chlamydiia</taxon>
        <taxon>Chlamydiales</taxon>
        <taxon>Chlamydiaceae</taxon>
        <taxon>Chlamydia/Chlamydophila group</taxon>
        <taxon>Chlamydia</taxon>
    </lineage>
</organism>